<protein>
    <recommendedName>
        <fullName evidence="3">Periviscerokinin-3</fullName>
        <shortName evidence="3">BleDi-PVK-3</shortName>
    </recommendedName>
</protein>
<dbReference type="GO" id="GO:0005576">
    <property type="term" value="C:extracellular region"/>
    <property type="evidence" value="ECO:0007669"/>
    <property type="project" value="UniProtKB-SubCell"/>
</dbReference>
<dbReference type="GO" id="GO:0007218">
    <property type="term" value="P:neuropeptide signaling pathway"/>
    <property type="evidence" value="ECO:0007669"/>
    <property type="project" value="UniProtKB-KW"/>
</dbReference>
<dbReference type="InterPro" id="IPR013231">
    <property type="entry name" value="Periviscerokinin"/>
</dbReference>
<dbReference type="Pfam" id="PF08259">
    <property type="entry name" value="Periviscerokin"/>
    <property type="match status" value="1"/>
</dbReference>
<reference evidence="4" key="1">
    <citation type="journal article" date="2009" name="BMC Evol. Biol.">
        <title>A proteomic approach for studying insect phylogeny: CAPA peptides of ancient insect taxa (Dictyoptera, Blattoptera) as a test case.</title>
        <authorList>
            <person name="Roth S."/>
            <person name="Fromm B."/>
            <person name="Gaede G."/>
            <person name="Predel R."/>
        </authorList>
    </citation>
    <scope>PROTEIN SEQUENCE</scope>
    <scope>AMIDATION AT VAL-11</scope>
    <source>
        <tissue evidence="2">Abdominal perisympathetic organs</tissue>
    </source>
</reference>
<keyword id="KW-0027">Amidation</keyword>
<keyword id="KW-0903">Direct protein sequencing</keyword>
<keyword id="KW-0527">Neuropeptide</keyword>
<keyword id="KW-0964">Secreted</keyword>
<name>PVK3_BLEDI</name>
<feature type="peptide" id="PRO_0000378820" description="Periviscerokinin-3" evidence="2">
    <location>
        <begin position="1"/>
        <end position="11"/>
    </location>
</feature>
<feature type="modified residue" description="Valine amide" evidence="2">
    <location>
        <position position="11"/>
    </location>
</feature>
<evidence type="ECO:0000255" key="1"/>
<evidence type="ECO:0000269" key="2">
    <source>
    </source>
</evidence>
<evidence type="ECO:0000303" key="3">
    <source>
    </source>
</evidence>
<evidence type="ECO:0000305" key="4"/>
<comment type="function">
    <text evidence="4">Mediates visceral muscle contractile activity (myotropic activity).</text>
</comment>
<comment type="subcellular location">
    <subcellularLocation>
        <location evidence="4">Secreted</location>
    </subcellularLocation>
</comment>
<comment type="similarity">
    <text evidence="1">Belongs to the periviscerokinin family.</text>
</comment>
<proteinExistence type="evidence at protein level"/>
<accession>P85563</accession>
<organism>
    <name type="scientific">Blepharodera discoidalis</name>
    <name type="common">Cockroach</name>
    <dbReference type="NCBI Taxonomy" id="521524"/>
    <lineage>
        <taxon>Eukaryota</taxon>
        <taxon>Metazoa</taxon>
        <taxon>Ecdysozoa</taxon>
        <taxon>Arthropoda</taxon>
        <taxon>Hexapoda</taxon>
        <taxon>Insecta</taxon>
        <taxon>Pterygota</taxon>
        <taxon>Neoptera</taxon>
        <taxon>Polyneoptera</taxon>
        <taxon>Dictyoptera</taxon>
        <taxon>Blattodea</taxon>
        <taxon>Blaberoidea</taxon>
        <taxon>Blaberidae</taxon>
        <taxon>Epilamprinae</taxon>
        <taxon>Blepharodera</taxon>
    </lineage>
</organism>
<sequence>GSSGMIPFPRV</sequence>